<accession>Q57890</accession>
<protein>
    <recommendedName>
        <fullName>Uncharacterized protein MJ0448</fullName>
    </recommendedName>
</protein>
<keyword id="KW-1185">Reference proteome</keyword>
<comment type="similarity">
    <text evidence="1">Belongs to the metallo-beta-lactamase superfamily.</text>
</comment>
<feature type="chain" id="PRO_0000106880" description="Uncharacterized protein MJ0448">
    <location>
        <begin position="1"/>
        <end position="256"/>
    </location>
</feature>
<proteinExistence type="inferred from homology"/>
<organism>
    <name type="scientific">Methanocaldococcus jannaschii (strain ATCC 43067 / DSM 2661 / JAL-1 / JCM 10045 / NBRC 100440)</name>
    <name type="common">Methanococcus jannaschii</name>
    <dbReference type="NCBI Taxonomy" id="243232"/>
    <lineage>
        <taxon>Archaea</taxon>
        <taxon>Methanobacteriati</taxon>
        <taxon>Methanobacteriota</taxon>
        <taxon>Methanomada group</taxon>
        <taxon>Methanococci</taxon>
        <taxon>Methanococcales</taxon>
        <taxon>Methanocaldococcaceae</taxon>
        <taxon>Methanocaldococcus</taxon>
    </lineage>
</organism>
<reference key="1">
    <citation type="journal article" date="1996" name="Science">
        <title>Complete genome sequence of the methanogenic archaeon, Methanococcus jannaschii.</title>
        <authorList>
            <person name="Bult C.J."/>
            <person name="White O."/>
            <person name="Olsen G.J."/>
            <person name="Zhou L."/>
            <person name="Fleischmann R.D."/>
            <person name="Sutton G.G."/>
            <person name="Blake J.A."/>
            <person name="FitzGerald L.M."/>
            <person name="Clayton R.A."/>
            <person name="Gocayne J.D."/>
            <person name="Kerlavage A.R."/>
            <person name="Dougherty B.A."/>
            <person name="Tomb J.-F."/>
            <person name="Adams M.D."/>
            <person name="Reich C.I."/>
            <person name="Overbeek R."/>
            <person name="Kirkness E.F."/>
            <person name="Weinstock K.G."/>
            <person name="Merrick J.M."/>
            <person name="Glodek A."/>
            <person name="Scott J.L."/>
            <person name="Geoghagen N.S.M."/>
            <person name="Weidman J.F."/>
            <person name="Fuhrmann J.L."/>
            <person name="Nguyen D."/>
            <person name="Utterback T.R."/>
            <person name="Kelley J.M."/>
            <person name="Peterson J.D."/>
            <person name="Sadow P.W."/>
            <person name="Hanna M.C."/>
            <person name="Cotton M.D."/>
            <person name="Roberts K.M."/>
            <person name="Hurst M.A."/>
            <person name="Kaine B.P."/>
            <person name="Borodovsky M."/>
            <person name="Klenk H.-P."/>
            <person name="Fraser C.M."/>
            <person name="Smith H.O."/>
            <person name="Woese C.R."/>
            <person name="Venter J.C."/>
        </authorList>
    </citation>
    <scope>NUCLEOTIDE SEQUENCE [LARGE SCALE GENOMIC DNA]</scope>
    <source>
        <strain>ATCC 43067 / DSM 2661 / JAL-1 / JCM 10045 / NBRC 100440</strain>
    </source>
</reference>
<name>Y448_METJA</name>
<evidence type="ECO:0000305" key="1"/>
<gene>
    <name type="ordered locus">MJ0448</name>
</gene>
<sequence length="256" mass="29409">MIKILVDNTAYKKFFAQHGFSALIEINNKRILFDAGQNSITLRENLRLFNEKEGFDYIVLSHGHYDHCDGLKYVIENDLINGKVIAHKDAFLDKYAGNRYIGIDEEIKEYLLKKADLEIIEEPYKIDKDIIVSGYVPREYEYEMEEFQCIKDGKRVKDEVNDDMFLIAKGILITGCSHSGIINVVEYGKKLSEIKGVLGGFHLVGVSDNYLNRIVDYFKSQDFWIMPMHCTGFKALTKLSQLNNFVYGHVGKIIGI</sequence>
<dbReference type="EMBL" id="L77117">
    <property type="protein sequence ID" value="AAB98437.1"/>
    <property type="molecule type" value="Genomic_DNA"/>
</dbReference>
<dbReference type="PIR" id="H64355">
    <property type="entry name" value="H64355"/>
</dbReference>
<dbReference type="RefSeq" id="WP_010869947.1">
    <property type="nucleotide sequence ID" value="NC_000909.1"/>
</dbReference>
<dbReference type="SMR" id="Q57890"/>
<dbReference type="FunCoup" id="Q57890">
    <property type="interactions" value="110"/>
</dbReference>
<dbReference type="STRING" id="243232.MJ_0448"/>
<dbReference type="PaxDb" id="243232-MJ_0448"/>
<dbReference type="EnsemblBacteria" id="AAB98437">
    <property type="protein sequence ID" value="AAB98437"/>
    <property type="gene ID" value="MJ_0448"/>
</dbReference>
<dbReference type="GeneID" id="1451308"/>
<dbReference type="KEGG" id="mja:MJ_0448"/>
<dbReference type="eggNOG" id="arCOG00503">
    <property type="taxonomic scope" value="Archaea"/>
</dbReference>
<dbReference type="HOGENOM" id="CLU_036012_0_0_2"/>
<dbReference type="InParanoid" id="Q57890"/>
<dbReference type="OrthoDB" id="7773at2157"/>
<dbReference type="PhylomeDB" id="Q57890"/>
<dbReference type="Proteomes" id="UP000000805">
    <property type="component" value="Chromosome"/>
</dbReference>
<dbReference type="GO" id="GO:0016740">
    <property type="term" value="F:transferase activity"/>
    <property type="evidence" value="ECO:0000318"/>
    <property type="project" value="GO_Central"/>
</dbReference>
<dbReference type="CDD" id="cd07713">
    <property type="entry name" value="DHPS-like_MBL-fold"/>
    <property type="match status" value="1"/>
</dbReference>
<dbReference type="Gene3D" id="3.60.15.10">
    <property type="entry name" value="Ribonuclease Z/Hydroxyacylglutathione hydrolase-like"/>
    <property type="match status" value="1"/>
</dbReference>
<dbReference type="InterPro" id="IPR041712">
    <property type="entry name" value="DHPS-like_MBL-fold"/>
</dbReference>
<dbReference type="InterPro" id="IPR001279">
    <property type="entry name" value="Metallo-B-lactamas"/>
</dbReference>
<dbReference type="InterPro" id="IPR052926">
    <property type="entry name" value="Metallo-beta-lactamase_dom"/>
</dbReference>
<dbReference type="InterPro" id="IPR036866">
    <property type="entry name" value="RibonucZ/Hydroxyglut_hydro"/>
</dbReference>
<dbReference type="PANTHER" id="PTHR13754:SF18">
    <property type="entry name" value="7,8-DIHYDROPTERIN-6-METHYL-4-(BETA-D-RIBOFURANOSYL)-AMINOBENZENE-5'-PHOSPHATE SYNTHASE"/>
    <property type="match status" value="1"/>
</dbReference>
<dbReference type="PANTHER" id="PTHR13754">
    <property type="entry name" value="METALLO-BETA-LACTAMASE SUPERFAMILY PROTEIN"/>
    <property type="match status" value="1"/>
</dbReference>
<dbReference type="Pfam" id="PF00753">
    <property type="entry name" value="Lactamase_B"/>
    <property type="match status" value="1"/>
</dbReference>
<dbReference type="SMART" id="SM00849">
    <property type="entry name" value="Lactamase_B"/>
    <property type="match status" value="1"/>
</dbReference>
<dbReference type="SUPFAM" id="SSF56281">
    <property type="entry name" value="Metallo-hydrolase/oxidoreductase"/>
    <property type="match status" value="1"/>
</dbReference>